<organism>
    <name type="scientific">Macaca mulatta</name>
    <name type="common">Rhesus macaque</name>
    <dbReference type="NCBI Taxonomy" id="9544"/>
    <lineage>
        <taxon>Eukaryota</taxon>
        <taxon>Metazoa</taxon>
        <taxon>Chordata</taxon>
        <taxon>Craniata</taxon>
        <taxon>Vertebrata</taxon>
        <taxon>Euteleostomi</taxon>
        <taxon>Mammalia</taxon>
        <taxon>Eutheria</taxon>
        <taxon>Euarchontoglires</taxon>
        <taxon>Primates</taxon>
        <taxon>Haplorrhini</taxon>
        <taxon>Catarrhini</taxon>
        <taxon>Cercopithecidae</taxon>
        <taxon>Cercopithecinae</taxon>
        <taxon>Macaca</taxon>
    </lineage>
</organism>
<name>CCR8_MACMU</name>
<reference key="1">
    <citation type="journal article" date="2001" name="AIDS Res. Hum. Retroviruses">
        <title>Identification and comparison of eleven rhesus macaque chemokine receptors.</title>
        <authorList>
            <person name="Margulies B.J."/>
            <person name="Hauer D.A."/>
            <person name="Clements J.E."/>
        </authorList>
    </citation>
    <scope>NUCLEOTIDE SEQUENCE [GENOMIC DNA]</scope>
    <source>
        <tissue>Spleen</tissue>
    </source>
</reference>
<accession>O97665</accession>
<comment type="function">
    <text evidence="1">Receptor for the chemokines CCL1/SCYA1/I-309. May regulate monocyte chemotaxis and thymic cell line apoptosis (By similarity).</text>
</comment>
<comment type="subcellular location">
    <subcellularLocation>
        <location>Cell membrane</location>
        <topology>Multi-pass membrane protein</topology>
    </subcellularLocation>
</comment>
<comment type="similarity">
    <text evidence="3">Belongs to the G-protein coupled receptor 1 family.</text>
</comment>
<feature type="chain" id="PRO_0000069289" description="C-C chemokine receptor type 8">
    <location>
        <begin position="1"/>
        <end position="356"/>
    </location>
</feature>
<feature type="topological domain" description="Extracellular" evidence="2">
    <location>
        <begin position="1"/>
        <end position="35"/>
    </location>
</feature>
<feature type="transmembrane region" description="Helical; Name=1" evidence="2">
    <location>
        <begin position="36"/>
        <end position="63"/>
    </location>
</feature>
<feature type="topological domain" description="Cytoplasmic" evidence="2">
    <location>
        <begin position="64"/>
        <end position="73"/>
    </location>
</feature>
<feature type="transmembrane region" description="Helical; Name=2" evidence="2">
    <location>
        <begin position="74"/>
        <end position="93"/>
    </location>
</feature>
<feature type="topological domain" description="Extracellular" evidence="2">
    <location>
        <begin position="94"/>
        <end position="107"/>
    </location>
</feature>
<feature type="transmembrane region" description="Helical; Name=3" evidence="2">
    <location>
        <begin position="108"/>
        <end position="129"/>
    </location>
</feature>
<feature type="topological domain" description="Cytoplasmic" evidence="2">
    <location>
        <begin position="130"/>
        <end position="146"/>
    </location>
</feature>
<feature type="transmembrane region" description="Helical; Name=4" evidence="2">
    <location>
        <begin position="147"/>
        <end position="172"/>
    </location>
</feature>
<feature type="topological domain" description="Extracellular" evidence="2">
    <location>
        <begin position="173"/>
        <end position="203"/>
    </location>
</feature>
<feature type="transmembrane region" description="Helical; Name=5" evidence="2">
    <location>
        <begin position="204"/>
        <end position="223"/>
    </location>
</feature>
<feature type="topological domain" description="Cytoplasmic" evidence="2">
    <location>
        <begin position="224"/>
        <end position="239"/>
    </location>
</feature>
<feature type="transmembrane region" description="Helical; Name=6" evidence="2">
    <location>
        <begin position="240"/>
        <end position="264"/>
    </location>
</feature>
<feature type="topological domain" description="Extracellular" evidence="2">
    <location>
        <begin position="265"/>
        <end position="281"/>
    </location>
</feature>
<feature type="transmembrane region" description="Helical; Name=7" evidence="2">
    <location>
        <begin position="282"/>
        <end position="305"/>
    </location>
</feature>
<feature type="topological domain" description="Cytoplasmic" evidence="2">
    <location>
        <begin position="306"/>
        <end position="356"/>
    </location>
</feature>
<feature type="disulfide bond" evidence="3">
    <location>
        <begin position="106"/>
        <end position="184"/>
    </location>
</feature>
<proteinExistence type="inferred from homology"/>
<keyword id="KW-1003">Cell membrane</keyword>
<keyword id="KW-1015">Disulfide bond</keyword>
<keyword id="KW-0297">G-protein coupled receptor</keyword>
<keyword id="KW-0472">Membrane</keyword>
<keyword id="KW-0675">Receptor</keyword>
<keyword id="KW-1185">Reference proteome</keyword>
<keyword id="KW-0807">Transducer</keyword>
<keyword id="KW-0812">Transmembrane</keyword>
<keyword id="KW-1133">Transmembrane helix</keyword>
<gene>
    <name type="primary">CCR8</name>
</gene>
<protein>
    <recommendedName>
        <fullName>C-C chemokine receptor type 8</fullName>
        <shortName>C-C CKR-8</shortName>
        <shortName>CC-CKR-8</shortName>
        <shortName>CCR-8</shortName>
    </recommendedName>
    <cdAntigenName>CDw198</cdAntigenName>
</protein>
<dbReference type="EMBL" id="AF100205">
    <property type="protein sequence ID" value="AAC72403.1"/>
    <property type="molecule type" value="Genomic_DNA"/>
</dbReference>
<dbReference type="SMR" id="O97665"/>
<dbReference type="FunCoup" id="O97665">
    <property type="interactions" value="763"/>
</dbReference>
<dbReference type="STRING" id="9544.ENSMMUP00000030243"/>
<dbReference type="PaxDb" id="9544-ENSMMUP00000030243"/>
<dbReference type="eggNOG" id="KOG3656">
    <property type="taxonomic scope" value="Eukaryota"/>
</dbReference>
<dbReference type="InParanoid" id="O97665"/>
<dbReference type="Proteomes" id="UP000006718">
    <property type="component" value="Unassembled WGS sequence"/>
</dbReference>
<dbReference type="GO" id="GO:0009897">
    <property type="term" value="C:external side of plasma membrane"/>
    <property type="evidence" value="ECO:0000318"/>
    <property type="project" value="GO_Central"/>
</dbReference>
<dbReference type="GO" id="GO:0019957">
    <property type="term" value="F:C-C chemokine binding"/>
    <property type="evidence" value="ECO:0000318"/>
    <property type="project" value="GO_Central"/>
</dbReference>
<dbReference type="GO" id="GO:0016493">
    <property type="term" value="F:C-C chemokine receptor activity"/>
    <property type="evidence" value="ECO:0000318"/>
    <property type="project" value="GO_Central"/>
</dbReference>
<dbReference type="GO" id="GO:0019722">
    <property type="term" value="P:calcium-mediated signaling"/>
    <property type="evidence" value="ECO:0000318"/>
    <property type="project" value="GO_Central"/>
</dbReference>
<dbReference type="GO" id="GO:0060326">
    <property type="term" value="P:cell chemotaxis"/>
    <property type="evidence" value="ECO:0000318"/>
    <property type="project" value="GO_Central"/>
</dbReference>
<dbReference type="GO" id="GO:0006955">
    <property type="term" value="P:immune response"/>
    <property type="evidence" value="ECO:0000318"/>
    <property type="project" value="GO_Central"/>
</dbReference>
<dbReference type="GO" id="GO:0007204">
    <property type="term" value="P:positive regulation of cytosolic calcium ion concentration"/>
    <property type="evidence" value="ECO:0000318"/>
    <property type="project" value="GO_Central"/>
</dbReference>
<dbReference type="FunFam" id="1.20.1070.10:FF:000026">
    <property type="entry name" value="C-C chemokine receptor type 5"/>
    <property type="match status" value="1"/>
</dbReference>
<dbReference type="Gene3D" id="1.20.1070.10">
    <property type="entry name" value="Rhodopsin 7-helix transmembrane proteins"/>
    <property type="match status" value="1"/>
</dbReference>
<dbReference type="InterPro" id="IPR050119">
    <property type="entry name" value="CCR1-9-like"/>
</dbReference>
<dbReference type="InterPro" id="IPR004068">
    <property type="entry name" value="Chemokine_CCR8"/>
</dbReference>
<dbReference type="InterPro" id="IPR000355">
    <property type="entry name" value="Chemokine_rcpt"/>
</dbReference>
<dbReference type="InterPro" id="IPR000276">
    <property type="entry name" value="GPCR_Rhodpsn"/>
</dbReference>
<dbReference type="InterPro" id="IPR017452">
    <property type="entry name" value="GPCR_Rhodpsn_7TM"/>
</dbReference>
<dbReference type="PANTHER" id="PTHR10489:SF627">
    <property type="entry name" value="C-C CHEMOKINE RECEPTOR TYPE 8"/>
    <property type="match status" value="1"/>
</dbReference>
<dbReference type="PANTHER" id="PTHR10489">
    <property type="entry name" value="CELL ADHESION MOLECULE"/>
    <property type="match status" value="1"/>
</dbReference>
<dbReference type="Pfam" id="PF00001">
    <property type="entry name" value="7tm_1"/>
    <property type="match status" value="1"/>
</dbReference>
<dbReference type="PRINTS" id="PR00657">
    <property type="entry name" value="CCCHEMOKINER"/>
</dbReference>
<dbReference type="PRINTS" id="PR01530">
    <property type="entry name" value="CHEMOKINER8"/>
</dbReference>
<dbReference type="PRINTS" id="PR00237">
    <property type="entry name" value="GPCRRHODOPSN"/>
</dbReference>
<dbReference type="SUPFAM" id="SSF81321">
    <property type="entry name" value="Family A G protein-coupled receptor-like"/>
    <property type="match status" value="1"/>
</dbReference>
<dbReference type="PROSITE" id="PS00237">
    <property type="entry name" value="G_PROTEIN_RECEP_F1_1"/>
    <property type="match status" value="1"/>
</dbReference>
<dbReference type="PROSITE" id="PS50262">
    <property type="entry name" value="G_PROTEIN_RECEP_F1_2"/>
    <property type="match status" value="1"/>
</dbReference>
<evidence type="ECO:0000250" key="1"/>
<evidence type="ECO:0000255" key="2"/>
<evidence type="ECO:0000255" key="3">
    <source>
        <dbReference type="PROSITE-ProRule" id="PRU00521"/>
    </source>
</evidence>
<sequence>MDYTLDPSMTTMTDYYYPDSLSSPCDGELIQRNDKLLLAVFYCLLFVFSLLGNSLVILVLVVCKKLRNITDIYLLNLALSDLLFVFSFPFQTYYQLDQWVFGTVMCKVVSGFYYIGFYSSMFFITLMSVDRYLAVVHAVYAIKVRTIRMGTTTLSLLVWLTAIMATIPLLVFYQVASEDGVLQCYSFYNQQTLKWKIFTNFEMNILGLLIPFTIFMFCYIKILHQLKRCQNHNKTKAIRLVLIVVIASLLFWVPFNVVLFLTSLHSMHILDGCSISQQLNYATHVTEIISFTHCCVNPVIYAFVGEKFKKHLSEIFQKSCSHIFIYLGRQMPRESCEKSSSCQQHSFRSSSIDYIL</sequence>